<protein>
    <recommendedName>
        <fullName evidence="1">Hydroxyacylglutathione hydrolase</fullName>
        <ecNumber evidence="1">3.1.2.6</ecNumber>
    </recommendedName>
    <alternativeName>
        <fullName evidence="1">Glyoxalase II</fullName>
        <shortName evidence="1">Glx II</shortName>
    </alternativeName>
</protein>
<dbReference type="EC" id="3.1.2.6" evidence="1"/>
<dbReference type="EMBL" id="CP000393">
    <property type="protein sequence ID" value="ABG52833.1"/>
    <property type="molecule type" value="Genomic_DNA"/>
</dbReference>
<dbReference type="RefSeq" id="WP_011613163.1">
    <property type="nucleotide sequence ID" value="NC_008312.1"/>
</dbReference>
<dbReference type="SMR" id="Q10Y41"/>
<dbReference type="STRING" id="203124.Tery_3786"/>
<dbReference type="KEGG" id="ter:Tery_3786"/>
<dbReference type="eggNOG" id="COG0491">
    <property type="taxonomic scope" value="Bacteria"/>
</dbReference>
<dbReference type="HOGENOM" id="CLU_030571_4_1_3"/>
<dbReference type="OrthoDB" id="9802897at2"/>
<dbReference type="UniPathway" id="UPA00619">
    <property type="reaction ID" value="UER00676"/>
</dbReference>
<dbReference type="GO" id="GO:0004416">
    <property type="term" value="F:hydroxyacylglutathione hydrolase activity"/>
    <property type="evidence" value="ECO:0007669"/>
    <property type="project" value="UniProtKB-UniRule"/>
</dbReference>
<dbReference type="GO" id="GO:0046872">
    <property type="term" value="F:metal ion binding"/>
    <property type="evidence" value="ECO:0007669"/>
    <property type="project" value="UniProtKB-KW"/>
</dbReference>
<dbReference type="GO" id="GO:0019243">
    <property type="term" value="P:methylglyoxal catabolic process to D-lactate via S-lactoyl-glutathione"/>
    <property type="evidence" value="ECO:0007669"/>
    <property type="project" value="InterPro"/>
</dbReference>
<dbReference type="CDD" id="cd07723">
    <property type="entry name" value="hydroxyacylglutathione_hydrolase_MBL-fold"/>
    <property type="match status" value="1"/>
</dbReference>
<dbReference type="Gene3D" id="3.60.15.10">
    <property type="entry name" value="Ribonuclease Z/Hydroxyacylglutathione hydrolase-like"/>
    <property type="match status" value="1"/>
</dbReference>
<dbReference type="HAMAP" id="MF_01374">
    <property type="entry name" value="Glyoxalase_2"/>
    <property type="match status" value="1"/>
</dbReference>
<dbReference type="InterPro" id="IPR035680">
    <property type="entry name" value="Clx_II_MBL"/>
</dbReference>
<dbReference type="InterPro" id="IPR050110">
    <property type="entry name" value="Glyoxalase_II_hydrolase"/>
</dbReference>
<dbReference type="InterPro" id="IPR032282">
    <property type="entry name" value="HAGH_C"/>
</dbReference>
<dbReference type="InterPro" id="IPR017782">
    <property type="entry name" value="Hydroxyacylglutathione_Hdrlase"/>
</dbReference>
<dbReference type="InterPro" id="IPR001279">
    <property type="entry name" value="Metallo-B-lactamas"/>
</dbReference>
<dbReference type="InterPro" id="IPR036866">
    <property type="entry name" value="RibonucZ/Hydroxyglut_hydro"/>
</dbReference>
<dbReference type="NCBIfam" id="TIGR03413">
    <property type="entry name" value="GSH_gloB"/>
    <property type="match status" value="1"/>
</dbReference>
<dbReference type="PANTHER" id="PTHR43705">
    <property type="entry name" value="HYDROXYACYLGLUTATHIONE HYDROLASE"/>
    <property type="match status" value="1"/>
</dbReference>
<dbReference type="PANTHER" id="PTHR43705:SF1">
    <property type="entry name" value="HYDROXYACYLGLUTATHIONE HYDROLASE GLOB"/>
    <property type="match status" value="1"/>
</dbReference>
<dbReference type="Pfam" id="PF16123">
    <property type="entry name" value="HAGH_C"/>
    <property type="match status" value="1"/>
</dbReference>
<dbReference type="Pfam" id="PF00753">
    <property type="entry name" value="Lactamase_B"/>
    <property type="match status" value="1"/>
</dbReference>
<dbReference type="PIRSF" id="PIRSF005457">
    <property type="entry name" value="Glx"/>
    <property type="match status" value="1"/>
</dbReference>
<dbReference type="SMART" id="SM00849">
    <property type="entry name" value="Lactamase_B"/>
    <property type="match status" value="1"/>
</dbReference>
<dbReference type="SUPFAM" id="SSF56281">
    <property type="entry name" value="Metallo-hydrolase/oxidoreductase"/>
    <property type="match status" value="1"/>
</dbReference>
<gene>
    <name evidence="1" type="primary">gloB</name>
    <name type="ordered locus">Tery_3786</name>
</gene>
<evidence type="ECO:0000255" key="1">
    <source>
        <dbReference type="HAMAP-Rule" id="MF_01374"/>
    </source>
</evidence>
<sequence>MDIYRLPALSDNYIFLLHDPNQNIGAVVDPAEVRPVIDKLESLGAELVTIFNTHHHFDHVGANKQLIQKFPQLKVYGGVEDRGRIPGQQVFLQEGDRVHFADRVGEVLFVPGHTIGHIAYYFPSVAFGETGELFCGDTLFAGGCGRLFEGTPAQMVDSLNKLRNLPDNTRIWCAHEYTLKNLQFAITVDKDNTDLQSRWAEVKTARGRNEATVPSMIGVEKRTNPFLRWEQPALQLAVQSQDPVQTFARLRGRKDRF</sequence>
<feature type="chain" id="PRO_1000068228" description="Hydroxyacylglutathione hydrolase">
    <location>
        <begin position="1"/>
        <end position="257"/>
    </location>
</feature>
<feature type="binding site" evidence="1">
    <location>
        <position position="54"/>
    </location>
    <ligand>
        <name>Zn(2+)</name>
        <dbReference type="ChEBI" id="CHEBI:29105"/>
        <label>1</label>
    </ligand>
</feature>
<feature type="binding site" evidence="1">
    <location>
        <position position="56"/>
    </location>
    <ligand>
        <name>Zn(2+)</name>
        <dbReference type="ChEBI" id="CHEBI:29105"/>
        <label>1</label>
    </ligand>
</feature>
<feature type="binding site" evidence="1">
    <location>
        <position position="58"/>
    </location>
    <ligand>
        <name>Zn(2+)</name>
        <dbReference type="ChEBI" id="CHEBI:29105"/>
        <label>2</label>
    </ligand>
</feature>
<feature type="binding site" evidence="1">
    <location>
        <position position="59"/>
    </location>
    <ligand>
        <name>Zn(2+)</name>
        <dbReference type="ChEBI" id="CHEBI:29105"/>
        <label>2</label>
    </ligand>
</feature>
<feature type="binding site" evidence="1">
    <location>
        <position position="113"/>
    </location>
    <ligand>
        <name>Zn(2+)</name>
        <dbReference type="ChEBI" id="CHEBI:29105"/>
        <label>1</label>
    </ligand>
</feature>
<feature type="binding site" evidence="1">
    <location>
        <position position="137"/>
    </location>
    <ligand>
        <name>Zn(2+)</name>
        <dbReference type="ChEBI" id="CHEBI:29105"/>
        <label>1</label>
    </ligand>
</feature>
<feature type="binding site" evidence="1">
    <location>
        <position position="137"/>
    </location>
    <ligand>
        <name>Zn(2+)</name>
        <dbReference type="ChEBI" id="CHEBI:29105"/>
        <label>2</label>
    </ligand>
</feature>
<feature type="binding site" evidence="1">
    <location>
        <position position="175"/>
    </location>
    <ligand>
        <name>Zn(2+)</name>
        <dbReference type="ChEBI" id="CHEBI:29105"/>
        <label>2</label>
    </ligand>
</feature>
<proteinExistence type="inferred from homology"/>
<comment type="function">
    <text evidence="1">Thiolesterase that catalyzes the hydrolysis of S-D-lactoyl-glutathione to form glutathione and D-lactic acid.</text>
</comment>
<comment type="catalytic activity">
    <reaction evidence="1">
        <text>an S-(2-hydroxyacyl)glutathione + H2O = a 2-hydroxy carboxylate + glutathione + H(+)</text>
        <dbReference type="Rhea" id="RHEA:21864"/>
        <dbReference type="ChEBI" id="CHEBI:15377"/>
        <dbReference type="ChEBI" id="CHEBI:15378"/>
        <dbReference type="ChEBI" id="CHEBI:57925"/>
        <dbReference type="ChEBI" id="CHEBI:58896"/>
        <dbReference type="ChEBI" id="CHEBI:71261"/>
        <dbReference type="EC" id="3.1.2.6"/>
    </reaction>
</comment>
<comment type="cofactor">
    <cofactor evidence="1">
        <name>Zn(2+)</name>
        <dbReference type="ChEBI" id="CHEBI:29105"/>
    </cofactor>
    <text evidence="1">Binds 2 Zn(2+) ions per subunit.</text>
</comment>
<comment type="pathway">
    <text evidence="1">Secondary metabolite metabolism; methylglyoxal degradation; (R)-lactate from methylglyoxal: step 2/2.</text>
</comment>
<comment type="subunit">
    <text evidence="1">Monomer.</text>
</comment>
<comment type="similarity">
    <text evidence="1">Belongs to the metallo-beta-lactamase superfamily. Glyoxalase II family.</text>
</comment>
<accession>Q10Y41</accession>
<organism>
    <name type="scientific">Trichodesmium erythraeum (strain IMS101)</name>
    <dbReference type="NCBI Taxonomy" id="203124"/>
    <lineage>
        <taxon>Bacteria</taxon>
        <taxon>Bacillati</taxon>
        <taxon>Cyanobacteriota</taxon>
        <taxon>Cyanophyceae</taxon>
        <taxon>Oscillatoriophycideae</taxon>
        <taxon>Oscillatoriales</taxon>
        <taxon>Microcoleaceae</taxon>
        <taxon>Trichodesmium</taxon>
    </lineage>
</organism>
<reference key="1">
    <citation type="journal article" date="2015" name="Proc. Natl. Acad. Sci. U.S.A.">
        <title>Trichodesmium genome maintains abundant, widespread noncoding DNA in situ, despite oligotrophic lifestyle.</title>
        <authorList>
            <person name="Walworth N."/>
            <person name="Pfreundt U."/>
            <person name="Nelson W.C."/>
            <person name="Mincer T."/>
            <person name="Heidelberg J.F."/>
            <person name="Fu F."/>
            <person name="Waterbury J.B."/>
            <person name="Glavina del Rio T."/>
            <person name="Goodwin L."/>
            <person name="Kyrpides N.C."/>
            <person name="Land M.L."/>
            <person name="Woyke T."/>
            <person name="Hutchins D.A."/>
            <person name="Hess W.R."/>
            <person name="Webb E.A."/>
        </authorList>
    </citation>
    <scope>NUCLEOTIDE SEQUENCE [LARGE SCALE GENOMIC DNA]</scope>
    <source>
        <strain>IMS101</strain>
    </source>
</reference>
<keyword id="KW-0378">Hydrolase</keyword>
<keyword id="KW-0479">Metal-binding</keyword>
<keyword id="KW-0862">Zinc</keyword>
<name>GLO2_TRIEI</name>